<accession>A0T0Q1</accession>
<organism>
    <name type="scientific">Thalassiosira pseudonana</name>
    <name type="common">Marine diatom</name>
    <name type="synonym">Cyclotella nana</name>
    <dbReference type="NCBI Taxonomy" id="35128"/>
    <lineage>
        <taxon>Eukaryota</taxon>
        <taxon>Sar</taxon>
        <taxon>Stramenopiles</taxon>
        <taxon>Ochrophyta</taxon>
        <taxon>Bacillariophyta</taxon>
        <taxon>Coscinodiscophyceae</taxon>
        <taxon>Thalassiosirophycidae</taxon>
        <taxon>Thalassiosirales</taxon>
        <taxon>Thalassiosiraceae</taxon>
        <taxon>Thalassiosira</taxon>
    </lineage>
</organism>
<reference key="1">
    <citation type="journal article" date="2007" name="Mol. Genet. Genomics">
        <title>Chloroplast genomes of the diatoms Phaeodactylum tricornutum and Thalassiosira pseudonana: comparison with other plastid genomes of the red lineage.</title>
        <authorList>
            <person name="Oudot-Le Secq M.-P."/>
            <person name="Grimwood J."/>
            <person name="Shapiro H."/>
            <person name="Armbrust E.V."/>
            <person name="Bowler C."/>
            <person name="Green B.R."/>
        </authorList>
    </citation>
    <scope>NUCLEOTIDE SEQUENCE [LARGE SCALE GENOMIC DNA]</scope>
    <source>
        <strain>CCMP1335 / NEPCC58 / CCAP 1085/12</strain>
    </source>
</reference>
<name>RK35_THAPS</name>
<keyword id="KW-0150">Chloroplast</keyword>
<keyword id="KW-0934">Plastid</keyword>
<keyword id="KW-0687">Ribonucleoprotein</keyword>
<keyword id="KW-0689">Ribosomal protein</keyword>
<protein>
    <recommendedName>
        <fullName evidence="1">Large ribosomal subunit protein bL35c</fullName>
    </recommendedName>
    <alternativeName>
        <fullName evidence="2">50S ribosomal protein L35, chloroplastic</fullName>
    </alternativeName>
</protein>
<gene>
    <name evidence="1" type="primary">rpl35</name>
</gene>
<comment type="subcellular location">
    <subcellularLocation>
        <location>Plastid</location>
        <location>Chloroplast</location>
    </subcellularLocation>
</comment>
<comment type="similarity">
    <text evidence="1">Belongs to the bacterial ribosomal protein bL35 family.</text>
</comment>
<proteinExistence type="inferred from homology"/>
<dbReference type="EMBL" id="EF067921">
    <property type="protein sequence ID" value="ABK20736.1"/>
    <property type="molecule type" value="Genomic_DNA"/>
</dbReference>
<dbReference type="RefSeq" id="YP_874513.1">
    <property type="nucleotide sequence ID" value="NC_008589.1"/>
</dbReference>
<dbReference type="SMR" id="A0T0Q1"/>
<dbReference type="GeneID" id="4524854"/>
<dbReference type="InParanoid" id="A0T0Q1"/>
<dbReference type="GO" id="GO:0009507">
    <property type="term" value="C:chloroplast"/>
    <property type="evidence" value="ECO:0007669"/>
    <property type="project" value="UniProtKB-SubCell"/>
</dbReference>
<dbReference type="GO" id="GO:0015934">
    <property type="term" value="C:large ribosomal subunit"/>
    <property type="evidence" value="ECO:0000318"/>
    <property type="project" value="GO_Central"/>
</dbReference>
<dbReference type="GO" id="GO:0003735">
    <property type="term" value="F:structural constituent of ribosome"/>
    <property type="evidence" value="ECO:0000318"/>
    <property type="project" value="GO_Central"/>
</dbReference>
<dbReference type="GO" id="GO:0006412">
    <property type="term" value="P:translation"/>
    <property type="evidence" value="ECO:0007669"/>
    <property type="project" value="UniProtKB-UniRule"/>
</dbReference>
<dbReference type="FunFam" id="4.10.410.60:FF:000001">
    <property type="entry name" value="50S ribosomal protein L35"/>
    <property type="match status" value="1"/>
</dbReference>
<dbReference type="Gene3D" id="4.10.410.60">
    <property type="match status" value="1"/>
</dbReference>
<dbReference type="HAMAP" id="MF_00514">
    <property type="entry name" value="Ribosomal_bL35"/>
    <property type="match status" value="1"/>
</dbReference>
<dbReference type="InterPro" id="IPR001706">
    <property type="entry name" value="Ribosomal_bL35"/>
</dbReference>
<dbReference type="InterPro" id="IPR021137">
    <property type="entry name" value="Ribosomal_bL35-like"/>
</dbReference>
<dbReference type="InterPro" id="IPR018265">
    <property type="entry name" value="Ribosomal_bL35_CS"/>
</dbReference>
<dbReference type="InterPro" id="IPR037229">
    <property type="entry name" value="Ribosomal_bL35_sf"/>
</dbReference>
<dbReference type="NCBIfam" id="TIGR00001">
    <property type="entry name" value="rpmI_bact"/>
    <property type="match status" value="1"/>
</dbReference>
<dbReference type="PANTHER" id="PTHR33343">
    <property type="entry name" value="54S RIBOSOMAL PROTEIN BL35M"/>
    <property type="match status" value="1"/>
</dbReference>
<dbReference type="PANTHER" id="PTHR33343:SF1">
    <property type="entry name" value="LARGE RIBOSOMAL SUBUNIT PROTEIN BL35M"/>
    <property type="match status" value="1"/>
</dbReference>
<dbReference type="Pfam" id="PF01632">
    <property type="entry name" value="Ribosomal_L35p"/>
    <property type="match status" value="1"/>
</dbReference>
<dbReference type="PRINTS" id="PR00064">
    <property type="entry name" value="RIBOSOMALL35"/>
</dbReference>
<dbReference type="SUPFAM" id="SSF143034">
    <property type="entry name" value="L35p-like"/>
    <property type="match status" value="1"/>
</dbReference>
<dbReference type="PROSITE" id="PS00936">
    <property type="entry name" value="RIBOSOMAL_L35"/>
    <property type="match status" value="1"/>
</dbReference>
<sequence length="64" mass="7358">MPKLKTRKAALKRYKKTGAGNFLRRHAYKGHLLMKKSNAQKRKLSQRVCVSSGDSKPIKLMLPY</sequence>
<evidence type="ECO:0000255" key="1">
    <source>
        <dbReference type="HAMAP-Rule" id="MF_00514"/>
    </source>
</evidence>
<evidence type="ECO:0000305" key="2"/>
<geneLocation type="chloroplast"/>
<feature type="chain" id="PRO_0000276532" description="Large ribosomal subunit protein bL35c">
    <location>
        <begin position="1"/>
        <end position="64"/>
    </location>
</feature>